<proteinExistence type="inferred from homology"/>
<gene>
    <name evidence="9" type="primary">ALK</name>
</gene>
<protein>
    <recommendedName>
        <fullName evidence="10">ALK tyrosine kinase receptor</fullName>
        <ecNumber evidence="2">2.7.10.1</ecNumber>
    </recommendedName>
</protein>
<dbReference type="EC" id="2.7.10.1" evidence="2"/>
<dbReference type="EMBL" id="AAEX03010811">
    <property type="status" value="NOT_ANNOTATED_CDS"/>
    <property type="molecule type" value="Genomic_DNA"/>
</dbReference>
<dbReference type="EMBL" id="AAEX03010812">
    <property type="status" value="NOT_ANNOTATED_CDS"/>
    <property type="molecule type" value="Genomic_DNA"/>
</dbReference>
<dbReference type="EMBL" id="AAEX03010813">
    <property type="status" value="NOT_ANNOTATED_CDS"/>
    <property type="molecule type" value="Genomic_DNA"/>
</dbReference>
<dbReference type="RefSeq" id="XP_038417111.1">
    <property type="nucleotide sequence ID" value="XM_038561183.1"/>
</dbReference>
<dbReference type="RefSeq" id="XP_038547086.1">
    <property type="nucleotide sequence ID" value="XM_038691158.1"/>
</dbReference>
<dbReference type="RefSeq" id="XP_540136.3">
    <property type="nucleotide sequence ID" value="XM_540136.5"/>
</dbReference>
<dbReference type="SMR" id="P0DV84"/>
<dbReference type="FunCoup" id="P0DV84">
    <property type="interactions" value="39"/>
</dbReference>
<dbReference type="GlyCosmos" id="P0DV84">
    <property type="glycosylation" value="16 sites, No reported glycans"/>
</dbReference>
<dbReference type="Ensembl" id="ENSCAFT00805015096">
    <property type="protein sequence ID" value="ENSCAFP00805011827"/>
    <property type="gene ID" value="ENSCAFG00805008192"/>
</dbReference>
<dbReference type="Ensembl" id="ENSCAFT00845020686.1">
    <property type="protein sequence ID" value="ENSCAFP00845016222.1"/>
    <property type="gene ID" value="ENSCAFG00845011603.1"/>
</dbReference>
<dbReference type="GeneID" id="483021"/>
<dbReference type="GeneTree" id="ENSGT00940000159280"/>
<dbReference type="HOGENOM" id="CLU_001878_2_2_1"/>
<dbReference type="OrthoDB" id="73209at2759"/>
<dbReference type="TreeFam" id="TF351636"/>
<dbReference type="Proteomes" id="UP000002254">
    <property type="component" value="Unplaced"/>
</dbReference>
<dbReference type="Proteomes" id="UP000694429">
    <property type="component" value="Unplaced"/>
</dbReference>
<dbReference type="Proteomes" id="UP000694542">
    <property type="component" value="Unplaced"/>
</dbReference>
<dbReference type="Proteomes" id="UP000805418">
    <property type="component" value="Chromosome 17"/>
</dbReference>
<dbReference type="GO" id="GO:0005886">
    <property type="term" value="C:plasma membrane"/>
    <property type="evidence" value="ECO:0000318"/>
    <property type="project" value="GO_Central"/>
</dbReference>
<dbReference type="GO" id="GO:0043235">
    <property type="term" value="C:receptor complex"/>
    <property type="evidence" value="ECO:0000318"/>
    <property type="project" value="GO_Central"/>
</dbReference>
<dbReference type="GO" id="GO:0005524">
    <property type="term" value="F:ATP binding"/>
    <property type="evidence" value="ECO:0007669"/>
    <property type="project" value="UniProtKB-KW"/>
</dbReference>
<dbReference type="GO" id="GO:0008201">
    <property type="term" value="F:heparin binding"/>
    <property type="evidence" value="ECO:0007669"/>
    <property type="project" value="Ensembl"/>
</dbReference>
<dbReference type="GO" id="GO:0042802">
    <property type="term" value="F:identical protein binding"/>
    <property type="evidence" value="ECO:0007669"/>
    <property type="project" value="Ensembl"/>
</dbReference>
<dbReference type="GO" id="GO:0030298">
    <property type="term" value="F:receptor signaling protein tyrosine kinase activator activity"/>
    <property type="evidence" value="ECO:0007669"/>
    <property type="project" value="Ensembl"/>
</dbReference>
<dbReference type="GO" id="GO:0004714">
    <property type="term" value="F:transmembrane receptor protein tyrosine kinase activity"/>
    <property type="evidence" value="ECO:0000318"/>
    <property type="project" value="GO_Central"/>
</dbReference>
<dbReference type="GO" id="GO:0030534">
    <property type="term" value="P:adult behavior"/>
    <property type="evidence" value="ECO:0007669"/>
    <property type="project" value="Ensembl"/>
</dbReference>
<dbReference type="GO" id="GO:0007169">
    <property type="term" value="P:cell surface receptor protein tyrosine kinase signaling pathway"/>
    <property type="evidence" value="ECO:0000318"/>
    <property type="project" value="GO_Central"/>
</dbReference>
<dbReference type="GO" id="GO:0097009">
    <property type="term" value="P:energy homeostasis"/>
    <property type="evidence" value="ECO:0007669"/>
    <property type="project" value="Ensembl"/>
</dbReference>
<dbReference type="GO" id="GO:0021766">
    <property type="term" value="P:hippocampus development"/>
    <property type="evidence" value="ECO:0007669"/>
    <property type="project" value="Ensembl"/>
</dbReference>
<dbReference type="GO" id="GO:0050995">
    <property type="term" value="P:negative regulation of lipid catabolic process"/>
    <property type="evidence" value="ECO:0007669"/>
    <property type="project" value="Ensembl"/>
</dbReference>
<dbReference type="GO" id="GO:1900006">
    <property type="term" value="P:positive regulation of dendrite development"/>
    <property type="evidence" value="ECO:0007669"/>
    <property type="project" value="Ensembl"/>
</dbReference>
<dbReference type="GO" id="GO:0042127">
    <property type="term" value="P:regulation of cell population proliferation"/>
    <property type="evidence" value="ECO:0000318"/>
    <property type="project" value="GO_Central"/>
</dbReference>
<dbReference type="GO" id="GO:0060159">
    <property type="term" value="P:regulation of dopamine receptor signaling pathway"/>
    <property type="evidence" value="ECO:0007669"/>
    <property type="project" value="Ensembl"/>
</dbReference>
<dbReference type="GO" id="GO:0045664">
    <property type="term" value="P:regulation of neuron differentiation"/>
    <property type="evidence" value="ECO:0000318"/>
    <property type="project" value="GO_Central"/>
</dbReference>
<dbReference type="GO" id="GO:0090648">
    <property type="term" value="P:response to environmental enrichment"/>
    <property type="evidence" value="ECO:0007669"/>
    <property type="project" value="Ensembl"/>
</dbReference>
<dbReference type="GO" id="GO:0006950">
    <property type="term" value="P:response to stress"/>
    <property type="evidence" value="ECO:0007669"/>
    <property type="project" value="Ensembl"/>
</dbReference>
<dbReference type="GO" id="GO:0036269">
    <property type="term" value="P:swimming behavior"/>
    <property type="evidence" value="ECO:0007669"/>
    <property type="project" value="Ensembl"/>
</dbReference>
<dbReference type="CDD" id="cd00112">
    <property type="entry name" value="LDLa"/>
    <property type="match status" value="1"/>
</dbReference>
<dbReference type="CDD" id="cd06263">
    <property type="entry name" value="MAM"/>
    <property type="match status" value="2"/>
</dbReference>
<dbReference type="CDD" id="cd05036">
    <property type="entry name" value="PTKc_ALK_LTK"/>
    <property type="match status" value="1"/>
</dbReference>
<dbReference type="FunFam" id="1.10.510.10:FF:000113">
    <property type="entry name" value="Tyrosine-protein kinase receptor"/>
    <property type="match status" value="1"/>
</dbReference>
<dbReference type="FunFam" id="2.60.120.200:FF:000132">
    <property type="entry name" value="Tyrosine-protein kinase receptor"/>
    <property type="match status" value="1"/>
</dbReference>
<dbReference type="FunFam" id="2.60.120.200:FF:000154">
    <property type="entry name" value="Tyrosine-protein kinase receptor"/>
    <property type="match status" value="1"/>
</dbReference>
<dbReference type="FunFam" id="3.30.200.20:FF:000117">
    <property type="entry name" value="Tyrosine-protein kinase receptor"/>
    <property type="match status" value="1"/>
</dbReference>
<dbReference type="Gene3D" id="2.60.120.200">
    <property type="match status" value="2"/>
</dbReference>
<dbReference type="Gene3D" id="4.10.400.10">
    <property type="entry name" value="Low-density Lipoprotein Receptor"/>
    <property type="match status" value="1"/>
</dbReference>
<dbReference type="Gene3D" id="3.30.200.20">
    <property type="entry name" value="Phosphorylase Kinase, domain 1"/>
    <property type="match status" value="1"/>
</dbReference>
<dbReference type="Gene3D" id="1.10.510.10">
    <property type="entry name" value="Transferase(Phosphotransferase) domain 1"/>
    <property type="match status" value="1"/>
</dbReference>
<dbReference type="InterPro" id="IPR055163">
    <property type="entry name" value="ALK/LTK-like_GRD"/>
</dbReference>
<dbReference type="InterPro" id="IPR013320">
    <property type="entry name" value="ConA-like_dom_sf"/>
</dbReference>
<dbReference type="InterPro" id="IPR011009">
    <property type="entry name" value="Kinase-like_dom_sf"/>
</dbReference>
<dbReference type="InterPro" id="IPR036055">
    <property type="entry name" value="LDL_receptor-like_sf"/>
</dbReference>
<dbReference type="InterPro" id="IPR002172">
    <property type="entry name" value="LDrepeatLR_classA_rpt"/>
</dbReference>
<dbReference type="InterPro" id="IPR000998">
    <property type="entry name" value="MAM_dom"/>
</dbReference>
<dbReference type="InterPro" id="IPR000719">
    <property type="entry name" value="Prot_kinase_dom"/>
</dbReference>
<dbReference type="InterPro" id="IPR017441">
    <property type="entry name" value="Protein_kinase_ATP_BS"/>
</dbReference>
<dbReference type="InterPro" id="IPR050122">
    <property type="entry name" value="RTK"/>
</dbReference>
<dbReference type="InterPro" id="IPR001245">
    <property type="entry name" value="Ser-Thr/Tyr_kinase_cat_dom"/>
</dbReference>
<dbReference type="InterPro" id="IPR008266">
    <property type="entry name" value="Tyr_kinase_AS"/>
</dbReference>
<dbReference type="InterPro" id="IPR020635">
    <property type="entry name" value="Tyr_kinase_cat_dom"/>
</dbReference>
<dbReference type="InterPro" id="IPR002011">
    <property type="entry name" value="Tyr_kinase_rcpt_2_CS"/>
</dbReference>
<dbReference type="PANTHER" id="PTHR24416:SF276">
    <property type="entry name" value="ALK TYROSINE KINASE RECEPTOR"/>
    <property type="match status" value="1"/>
</dbReference>
<dbReference type="PANTHER" id="PTHR24416">
    <property type="entry name" value="TYROSINE-PROTEIN KINASE RECEPTOR"/>
    <property type="match status" value="1"/>
</dbReference>
<dbReference type="Pfam" id="PF12810">
    <property type="entry name" value="ALK_LTK_GRD"/>
    <property type="match status" value="1"/>
</dbReference>
<dbReference type="Pfam" id="PF00629">
    <property type="entry name" value="MAM"/>
    <property type="match status" value="2"/>
</dbReference>
<dbReference type="Pfam" id="PF07714">
    <property type="entry name" value="PK_Tyr_Ser-Thr"/>
    <property type="match status" value="1"/>
</dbReference>
<dbReference type="PRINTS" id="PR00109">
    <property type="entry name" value="TYRKINASE"/>
</dbReference>
<dbReference type="SMART" id="SM00192">
    <property type="entry name" value="LDLa"/>
    <property type="match status" value="1"/>
</dbReference>
<dbReference type="SMART" id="SM00137">
    <property type="entry name" value="MAM"/>
    <property type="match status" value="1"/>
</dbReference>
<dbReference type="SMART" id="SM00219">
    <property type="entry name" value="TyrKc"/>
    <property type="match status" value="1"/>
</dbReference>
<dbReference type="SUPFAM" id="SSF49899">
    <property type="entry name" value="Concanavalin A-like lectins/glucanases"/>
    <property type="match status" value="2"/>
</dbReference>
<dbReference type="SUPFAM" id="SSF57424">
    <property type="entry name" value="LDL receptor-like module"/>
    <property type="match status" value="1"/>
</dbReference>
<dbReference type="SUPFAM" id="SSF56112">
    <property type="entry name" value="Protein kinase-like (PK-like)"/>
    <property type="match status" value="1"/>
</dbReference>
<dbReference type="PROSITE" id="PS50060">
    <property type="entry name" value="MAM_2"/>
    <property type="match status" value="2"/>
</dbReference>
<dbReference type="PROSITE" id="PS00107">
    <property type="entry name" value="PROTEIN_KINASE_ATP"/>
    <property type="match status" value="1"/>
</dbReference>
<dbReference type="PROSITE" id="PS50011">
    <property type="entry name" value="PROTEIN_KINASE_DOM"/>
    <property type="match status" value="1"/>
</dbReference>
<dbReference type="PROSITE" id="PS00109">
    <property type="entry name" value="PROTEIN_KINASE_TYR"/>
    <property type="match status" value="1"/>
</dbReference>
<dbReference type="PROSITE" id="PS00239">
    <property type="entry name" value="RECEPTOR_TYR_KIN_II"/>
    <property type="match status" value="1"/>
</dbReference>
<reference key="1">
    <citation type="journal article" date="2005" name="Nature">
        <title>Genome sequence, comparative analysis and haplotype structure of the domestic dog.</title>
        <authorList>
            <person name="Lindblad-Toh K."/>
            <person name="Wade C.M."/>
            <person name="Mikkelsen T.S."/>
            <person name="Karlsson E.K."/>
            <person name="Jaffe D.B."/>
            <person name="Kamal M."/>
            <person name="Clamp M."/>
            <person name="Chang J.L."/>
            <person name="Kulbokas E.J. III"/>
            <person name="Zody M.C."/>
            <person name="Mauceli E."/>
            <person name="Xie X."/>
            <person name="Breen M."/>
            <person name="Wayne R.K."/>
            <person name="Ostrander E.A."/>
            <person name="Ponting C.P."/>
            <person name="Galibert F."/>
            <person name="Smith D.R."/>
            <person name="deJong P.J."/>
            <person name="Kirkness E.F."/>
            <person name="Alvarez P."/>
            <person name="Biagi T."/>
            <person name="Brockman W."/>
            <person name="Butler J."/>
            <person name="Chin C.-W."/>
            <person name="Cook A."/>
            <person name="Cuff J."/>
            <person name="Daly M.J."/>
            <person name="DeCaprio D."/>
            <person name="Gnerre S."/>
            <person name="Grabherr M."/>
            <person name="Kellis M."/>
            <person name="Kleber M."/>
            <person name="Bardeleben C."/>
            <person name="Goodstadt L."/>
            <person name="Heger A."/>
            <person name="Hitte C."/>
            <person name="Kim L."/>
            <person name="Koepfli K.-P."/>
            <person name="Parker H.G."/>
            <person name="Pollinger J.P."/>
            <person name="Searle S.M.J."/>
            <person name="Sutter N.B."/>
            <person name="Thomas R."/>
            <person name="Webber C."/>
            <person name="Baldwin J."/>
            <person name="Abebe A."/>
            <person name="Abouelleil A."/>
            <person name="Aftuck L."/>
            <person name="Ait-Zahra M."/>
            <person name="Aldredge T."/>
            <person name="Allen N."/>
            <person name="An P."/>
            <person name="Anderson S."/>
            <person name="Antoine C."/>
            <person name="Arachchi H."/>
            <person name="Aslam A."/>
            <person name="Ayotte L."/>
            <person name="Bachantsang P."/>
            <person name="Barry A."/>
            <person name="Bayul T."/>
            <person name="Benamara M."/>
            <person name="Berlin A."/>
            <person name="Bessette D."/>
            <person name="Blitshteyn B."/>
            <person name="Bloom T."/>
            <person name="Blye J."/>
            <person name="Boguslavskiy L."/>
            <person name="Bonnet C."/>
            <person name="Boukhgalter B."/>
            <person name="Brown A."/>
            <person name="Cahill P."/>
            <person name="Calixte N."/>
            <person name="Camarata J."/>
            <person name="Cheshatsang Y."/>
            <person name="Chu J."/>
            <person name="Citroen M."/>
            <person name="Collymore A."/>
            <person name="Cooke P."/>
            <person name="Dawoe T."/>
            <person name="Daza R."/>
            <person name="Decktor K."/>
            <person name="DeGray S."/>
            <person name="Dhargay N."/>
            <person name="Dooley K."/>
            <person name="Dooley K."/>
            <person name="Dorje P."/>
            <person name="Dorjee K."/>
            <person name="Dorris L."/>
            <person name="Duffey N."/>
            <person name="Dupes A."/>
            <person name="Egbiremolen O."/>
            <person name="Elong R."/>
            <person name="Falk J."/>
            <person name="Farina A."/>
            <person name="Faro S."/>
            <person name="Ferguson D."/>
            <person name="Ferreira P."/>
            <person name="Fisher S."/>
            <person name="FitzGerald M."/>
            <person name="Foley K."/>
            <person name="Foley C."/>
            <person name="Franke A."/>
            <person name="Friedrich D."/>
            <person name="Gage D."/>
            <person name="Garber M."/>
            <person name="Gearin G."/>
            <person name="Giannoukos G."/>
            <person name="Goode T."/>
            <person name="Goyette A."/>
            <person name="Graham J."/>
            <person name="Grandbois E."/>
            <person name="Gyaltsen K."/>
            <person name="Hafez N."/>
            <person name="Hagopian D."/>
            <person name="Hagos B."/>
            <person name="Hall J."/>
            <person name="Healy C."/>
            <person name="Hegarty R."/>
            <person name="Honan T."/>
            <person name="Horn A."/>
            <person name="Houde N."/>
            <person name="Hughes L."/>
            <person name="Hunnicutt L."/>
            <person name="Husby M."/>
            <person name="Jester B."/>
            <person name="Jones C."/>
            <person name="Kamat A."/>
            <person name="Kanga B."/>
            <person name="Kells C."/>
            <person name="Khazanovich D."/>
            <person name="Kieu A.C."/>
            <person name="Kisner P."/>
            <person name="Kumar M."/>
            <person name="Lance K."/>
            <person name="Landers T."/>
            <person name="Lara M."/>
            <person name="Lee W."/>
            <person name="Leger J.-P."/>
            <person name="Lennon N."/>
            <person name="Leuper L."/>
            <person name="LeVine S."/>
            <person name="Liu J."/>
            <person name="Liu X."/>
            <person name="Lokyitsang Y."/>
            <person name="Lokyitsang T."/>
            <person name="Lui A."/>
            <person name="Macdonald J."/>
            <person name="Major J."/>
            <person name="Marabella R."/>
            <person name="Maru K."/>
            <person name="Matthews C."/>
            <person name="McDonough S."/>
            <person name="Mehta T."/>
            <person name="Meldrim J."/>
            <person name="Melnikov A."/>
            <person name="Meneus L."/>
            <person name="Mihalev A."/>
            <person name="Mihova T."/>
            <person name="Miller K."/>
            <person name="Mittelman R."/>
            <person name="Mlenga V."/>
            <person name="Mulrain L."/>
            <person name="Munson G."/>
            <person name="Navidi A."/>
            <person name="Naylor J."/>
            <person name="Nguyen T."/>
            <person name="Nguyen N."/>
            <person name="Nguyen C."/>
            <person name="Nguyen T."/>
            <person name="Nicol R."/>
            <person name="Norbu N."/>
            <person name="Norbu C."/>
            <person name="Novod N."/>
            <person name="Nyima T."/>
            <person name="Olandt P."/>
            <person name="O'Neill B."/>
            <person name="O'Neill K."/>
            <person name="Osman S."/>
            <person name="Oyono L."/>
            <person name="Patti C."/>
            <person name="Perrin D."/>
            <person name="Phunkhang P."/>
            <person name="Pierre F."/>
            <person name="Priest M."/>
            <person name="Rachupka A."/>
            <person name="Raghuraman S."/>
            <person name="Rameau R."/>
            <person name="Ray V."/>
            <person name="Raymond C."/>
            <person name="Rege F."/>
            <person name="Rise C."/>
            <person name="Rogers J."/>
            <person name="Rogov P."/>
            <person name="Sahalie J."/>
            <person name="Settipalli S."/>
            <person name="Sharpe T."/>
            <person name="Shea T."/>
            <person name="Sheehan M."/>
            <person name="Sherpa N."/>
            <person name="Shi J."/>
            <person name="Shih D."/>
            <person name="Sloan J."/>
            <person name="Smith C."/>
            <person name="Sparrow T."/>
            <person name="Stalker J."/>
            <person name="Stange-Thomann N."/>
            <person name="Stavropoulos S."/>
            <person name="Stone C."/>
            <person name="Stone S."/>
            <person name="Sykes S."/>
            <person name="Tchuinga P."/>
            <person name="Tenzing P."/>
            <person name="Tesfaye S."/>
            <person name="Thoulutsang D."/>
            <person name="Thoulutsang Y."/>
            <person name="Topham K."/>
            <person name="Topping I."/>
            <person name="Tsamla T."/>
            <person name="Vassiliev H."/>
            <person name="Venkataraman V."/>
            <person name="Vo A."/>
            <person name="Wangchuk T."/>
            <person name="Wangdi T."/>
            <person name="Weiand M."/>
            <person name="Wilkinson J."/>
            <person name="Wilson A."/>
            <person name="Yadav S."/>
            <person name="Yang S."/>
            <person name="Yang X."/>
            <person name="Young G."/>
            <person name="Yu Q."/>
            <person name="Zainoun J."/>
            <person name="Zembek L."/>
            <person name="Zimmer A."/>
            <person name="Lander E.S."/>
        </authorList>
    </citation>
    <scope>NUCLEOTIDE SEQUENCE [LARGE SCALE GENOMIC DNA]</scope>
    <source>
        <strain>Boxer</strain>
    </source>
</reference>
<reference key="2">
    <citation type="journal article" date="2015" name="Sci. Signal.">
        <title>Heparin is an activating ligand of the orphan receptor tyrosine kinase ALK.</title>
        <authorList>
            <person name="Murray P.B."/>
            <person name="Lax I."/>
            <person name="Reshetnyak A."/>
            <person name="Ligon G.F."/>
            <person name="Lillquist J.S."/>
            <person name="Natoli E.J. Jr."/>
            <person name="Shi X."/>
            <person name="Folta-Stogniew E."/>
            <person name="Gunel M."/>
            <person name="Alvarado D."/>
            <person name="Schlessinger J."/>
        </authorList>
    </citation>
    <scope>ACTIVITY REGULATION</scope>
    <scope>DOMAIN</scope>
</reference>
<feature type="signal peptide" evidence="3">
    <location>
        <begin position="1"/>
        <end position="18"/>
    </location>
</feature>
<feature type="chain" id="PRO_5023874220" description="ALK tyrosine kinase receptor" evidence="3">
    <location>
        <begin position="19"/>
        <end position="1631"/>
    </location>
</feature>
<feature type="topological domain" description="Extracellular" evidence="10">
    <location>
        <begin position="19"/>
        <end position="1053"/>
    </location>
</feature>
<feature type="transmembrane region" description="Helical" evidence="3">
    <location>
        <begin position="1054"/>
        <end position="1074"/>
    </location>
</feature>
<feature type="topological domain" description="Cytoplasmic" evidence="10">
    <location>
        <begin position="1075"/>
        <end position="1631"/>
    </location>
</feature>
<feature type="domain" description="MAM 1" evidence="4">
    <location>
        <begin position="280"/>
        <end position="443"/>
    </location>
</feature>
<feature type="domain" description="MAM 2" evidence="4">
    <location>
        <begin position="494"/>
        <end position="652"/>
    </location>
</feature>
<feature type="domain" description="Protein kinase" evidence="5">
    <location>
        <begin position="1131"/>
        <end position="1407"/>
    </location>
</feature>
<feature type="region of interest" description="Disordered" evidence="7">
    <location>
        <begin position="20"/>
        <end position="53"/>
    </location>
</feature>
<feature type="region of interest" description="Heparin-binding region" evidence="8">
    <location>
        <begin position="60"/>
        <end position="82"/>
    </location>
</feature>
<feature type="region of interest" description="EGF-like" evidence="2">
    <location>
        <begin position="1002"/>
        <end position="1040"/>
    </location>
</feature>
<feature type="region of interest" description="Disordered" evidence="7">
    <location>
        <begin position="1423"/>
        <end position="1493"/>
    </location>
</feature>
<feature type="region of interest" description="Disordered" evidence="7">
    <location>
        <begin position="1526"/>
        <end position="1554"/>
    </location>
</feature>
<feature type="region of interest" description="Disordered" evidence="7">
    <location>
        <begin position="1609"/>
        <end position="1631"/>
    </location>
</feature>
<feature type="compositionally biased region" description="Gly residues" evidence="7">
    <location>
        <begin position="21"/>
        <end position="39"/>
    </location>
</feature>
<feature type="active site" description="Proton acceptor" evidence="5">
    <location>
        <position position="1264"/>
    </location>
</feature>
<feature type="binding site" evidence="5">
    <location>
        <begin position="1137"/>
        <end position="1145"/>
    </location>
    <ligand>
        <name>ATP</name>
        <dbReference type="ChEBI" id="CHEBI:30616"/>
    </ligand>
</feature>
<feature type="binding site" evidence="5">
    <location>
        <position position="1165"/>
    </location>
    <ligand>
        <name>ATP</name>
        <dbReference type="ChEBI" id="CHEBI:30616"/>
    </ligand>
</feature>
<feature type="glycosylation site" description="N-linked (GlcNAc...) asparagine" evidence="3">
    <location>
        <position position="185"/>
    </location>
</feature>
<feature type="glycosylation site" description="N-linked (GlcNAc...) asparagine" evidence="3">
    <location>
        <position position="260"/>
    </location>
</feature>
<feature type="glycosylation site" description="N-linked (GlcNAc...) asparagine" evidence="3">
    <location>
        <position position="301"/>
    </location>
</feature>
<feature type="glycosylation site" description="N-linked (GlcNAc...) asparagine" evidence="3">
    <location>
        <position position="340"/>
    </location>
</feature>
<feature type="glycosylation site" description="N-linked (GlcNAc...) asparagine" evidence="3">
    <location>
        <position position="427"/>
    </location>
</feature>
<feature type="glycosylation site" description="N-linked (GlcNAc...) asparagine" evidence="3">
    <location>
        <position position="440"/>
    </location>
</feature>
<feature type="glycosylation site" description="N-linked (GlcNAc...) asparagine" evidence="3">
    <location>
        <position position="461"/>
    </location>
</feature>
<feature type="glycosylation site" description="N-linked (GlcNAc...) asparagine" evidence="3">
    <location>
        <position position="579"/>
    </location>
</feature>
<feature type="glycosylation site" description="N-linked (GlcNAc...) asparagine" evidence="3">
    <location>
        <position position="587"/>
    </location>
</feature>
<feature type="glycosylation site" description="N-linked (GlcNAc...) asparagine" evidence="3">
    <location>
        <position position="643"/>
    </location>
</feature>
<feature type="glycosylation site" description="N-linked (GlcNAc...) asparagine" evidence="3">
    <location>
        <position position="724"/>
    </location>
</feature>
<feature type="glycosylation site" description="N-linked (GlcNAc...) asparagine" evidence="3">
    <location>
        <position position="823"/>
    </location>
</feature>
<feature type="glycosylation site" description="N-linked (GlcNAc...) asparagine" evidence="3">
    <location>
        <position position="878"/>
    </location>
</feature>
<feature type="glycosylation site" description="N-linked (GlcNAc...) asparagine" evidence="3">
    <location>
        <position position="879"/>
    </location>
</feature>
<feature type="glycosylation site" description="N-linked (GlcNAc...) asparagine" evidence="3">
    <location>
        <position position="901"/>
    </location>
</feature>
<feature type="glycosylation site" description="N-linked (GlcNAc...) asparagine" evidence="3">
    <location>
        <position position="1001"/>
    </location>
</feature>
<feature type="disulfide bond" evidence="2">
    <location>
        <begin position="703"/>
        <end position="716"/>
    </location>
</feature>
<feature type="disulfide bond" evidence="2">
    <location>
        <begin position="798"/>
        <end position="809"/>
    </location>
</feature>
<feature type="disulfide bond" evidence="2">
    <location>
        <begin position="921"/>
        <end position="943"/>
    </location>
</feature>
<feature type="disulfide bond" evidence="2">
    <location>
        <begin position="1002"/>
        <end position="1010"/>
    </location>
</feature>
<feature type="disulfide bond" evidence="2">
    <location>
        <begin position="1005"/>
        <end position="1021"/>
    </location>
</feature>
<feature type="disulfide bond" evidence="2">
    <location>
        <begin position="1023"/>
        <end position="1036"/>
    </location>
</feature>
<accession>P0DV84</accession>
<name>ALK_CANLF</name>
<comment type="function">
    <text evidence="1 2">Neuronal receptor tyrosine kinase that is essentially and transiently expressed in specific regions of the central and peripheral nervous systems and plays an important role in the genesis and differentiation of the nervous system (By similarity). Also acts as a key thinness protein involved in the resistance to weight gain: in hypothalamic neurons, controls energy expenditure acting as a negative regulator of white adipose tissue lipolysis and sympathetic tone to fine-tune energy homeostasis (By similarity). Following activation by ALKAL2 ligand at the cell surface, transduces an extracellular signal into an intracellular response. In contrast, ALKAL1 is not a potent physiological ligand for ALK. Ligand-binding to the extracellular domain induces tyrosine kinase activation, leading to activation of the mitogen-activated protein kinase (MAPK) pathway. Phosphorylates almost exclusively at the first tyrosine of the Y-x-x-x-Y-Y motif. Induces tyrosine phosphorylation of CBL, FRS2, IRS1 and SHC1, as well as of the MAP kinases MAPK1/ERK2 and MAPK3/ERK1. ALK activation may also be regulated by pleiotrophin (PTN) and midkine (MDK). PTN-binding induces MAPK pathway activation, which is important for the anti-apoptotic signaling of PTN and regulation of cell proliferation. MDK-binding induces phosphorylation of the ALK target insulin receptor substrate (IRS1), activates mitogen-activated protein kinases (MAPKs) and PI3-kinase, resulting also in cell proliferation induction. Drives NF-kappa-B activation, probably through IRS1 and the activation of the AKT serine/threonine kinase. Recruitment of IRS1 to activated ALK and the activation of NF-kappa-B are essential for the autocrine growth and survival signaling of MDK (By similarity).</text>
</comment>
<comment type="catalytic activity">
    <reaction evidence="2 6">
        <text>L-tyrosyl-[protein] + ATP = O-phospho-L-tyrosyl-[protein] + ADP + H(+)</text>
        <dbReference type="Rhea" id="RHEA:10596"/>
        <dbReference type="Rhea" id="RHEA-COMP:10136"/>
        <dbReference type="Rhea" id="RHEA-COMP:20101"/>
        <dbReference type="ChEBI" id="CHEBI:15378"/>
        <dbReference type="ChEBI" id="CHEBI:30616"/>
        <dbReference type="ChEBI" id="CHEBI:46858"/>
        <dbReference type="ChEBI" id="CHEBI:61978"/>
        <dbReference type="ChEBI" id="CHEBI:456216"/>
        <dbReference type="EC" id="2.7.10.1"/>
    </reaction>
</comment>
<comment type="activity regulation">
    <text evidence="2 8">Activated upon ALKAL2 ligand-binding (By similarity). ALKAL2-driven activation is coupled with heparin-binding (PubMed:25605972). Following ligand-binding, homodimerizes and autophosphorylates, activating its kinase activity (By similarity). Inactivated through dephosphorylation by receptor protein tyrosine phosphatase beta and zeta complex (PTPRB/PTPRZ1) when there is no stimulation by a ligand (By similarity).</text>
</comment>
<comment type="subunit">
    <text evidence="2 8">Homodimer; homodimerizes following heparin- and ligand-binding (PubMed:25605972). Interacts with CBL, IRS1, PIK3R1 and PLCG1. Interacts with FRS2 and SHC1. Interacts with PTN and MDK (By similarity).</text>
</comment>
<comment type="subcellular location">
    <subcellularLocation>
        <location evidence="2">Cell membrane</location>
        <topology evidence="2">Single-pass type I membrane protein</topology>
    </subcellularLocation>
    <text evidence="2">Membrane attachment is essential for promotion of neuron-like differentiation and cell proliferation arrest through specific activation of the MAP kinase pathway.</text>
</comment>
<comment type="domain">
    <text evidence="2">The EGF-like region drives the cytokine specificity for ALKAL2.</text>
</comment>
<comment type="domain">
    <text evidence="2 8">The heparin-binding region binds heparin glycosaminoglycan (PubMed:25605972). Heparin-binding is required for ALKAL2-driven activation (By similarity).</text>
</comment>
<comment type="PTM">
    <text evidence="2">Phosphorylated at tyrosine residues by autocatalysis, which activates kinase activity. In cells not stimulated by a ligand, receptor protein tyrosine phosphatase beta and zeta complex (PTPRB/PTPRZ1) dephosphorylates ALK at the sites in ALK that are undergoing autophosphorylation through autoactivation.</text>
</comment>
<evidence type="ECO:0000250" key="1">
    <source>
        <dbReference type="UniProtKB" id="P97793"/>
    </source>
</evidence>
<evidence type="ECO:0000250" key="2">
    <source>
        <dbReference type="UniProtKB" id="Q9UM73"/>
    </source>
</evidence>
<evidence type="ECO:0000255" key="3"/>
<evidence type="ECO:0000255" key="4">
    <source>
        <dbReference type="PROSITE-ProRule" id="PRU00128"/>
    </source>
</evidence>
<evidence type="ECO:0000255" key="5">
    <source>
        <dbReference type="PROSITE-ProRule" id="PRU00159"/>
    </source>
</evidence>
<evidence type="ECO:0000255" key="6">
    <source>
        <dbReference type="PROSITE-ProRule" id="PRU10028"/>
    </source>
</evidence>
<evidence type="ECO:0000256" key="7">
    <source>
        <dbReference type="SAM" id="MobiDB-lite"/>
    </source>
</evidence>
<evidence type="ECO:0000269" key="8">
    <source>
    </source>
</evidence>
<evidence type="ECO:0000303" key="9">
    <source>
    </source>
</evidence>
<evidence type="ECO:0000305" key="10"/>
<sequence>MGSVGLLGLLLLRLSVTASGSGAGTGSGTGSGTGTGTGQLVGSPATGPALQPREPLSYSRLQRKSLAVDFVVPSLFRVYARDLLLPPWSSSEPRAGWTEARGSLALDCAPLLRLLGPPPGVSWAEGASSPAPAQARTLTRVLKGGSVRKLRRAKQLVLELGEEAILEGCVGPSPEEVTAGLLQFNLSELFSWWIRHGEGRLRIRLMPEKKASAVGREGRLSAAIRASQPRLLFQILGTGHSSLESPTSLPSPPPDPFAWNLTWIMKDSFPFLSHRSRYGLECSFDFPCELEYSPPLHDLGNQSWSWRRVPSEEASQMDLLDGPETEHSKEMPRGSFLLLNTSANSKHTILSPWMRSSSEHCKLAVSVHRHLQPSGRYVAQLLPHNEPGREILLVPTPGKHGWTVLQGRIGRPENPFRVALEYISSGNRSLSAVDFFALKNCSEGTSPGSKMALQSSFTCWNGTVLQLGQACDFHQDCAQGEDEGQLCSQLPAGFYCNFENGFCGWSQGILTPHNPRWQVRTLKDARVQDHRGHALSLSTTDVPTSESATVTSATFPAPMKNSPCELRMSWLIHGVLRGNVSLVLVENKTGKEQSRMVWHVATNEGLSLWQWTVLPLLDVADRFWLQIVAWWGQGSRATVAFDNISISLDCYLTISGEEKMLQNTAPKSRNLFERNPNKDPRPWENTRETPVFDPTVHWLFTTCGASGPHGPTQAQCNNAYRNSNLSVVVGSEGPLKGIQTWKVPATDTYSISGYGAAGGKGGKNTMMRSHGVSVLGIFNLEKGDTLYILVGQQGEDACPSTNRLIQKVCIGENNVIEEEIRVNRSVHEWAGGGGGGGGATYVFKMKDGVPVPLIIAAGGGGRAYGAKTDTFHPERLENNSSVLGLNGNSGAAGGGGGWNDNTSLLWSGKSLLEGATGGHSCPQAMKKWGWETRGGFGGGGGGCSSGGGGGGYIGGNAASNNDPEMDGEDGVSFISPLGILYTPALKVMEGHGEVNIKHYLNCSHCEGDECHMDPESHKVICFCDHGTVLAEDGVSCIVSPTPEPHLPLSLVLSVVTSALVAALVLAFSGIMIVYRRKHQELQAMQMELQSPEYKLSKLRTSTIMTDYNPNYCFAGKTSSISDLKEVPRKNITLIRGLGHGAFGEVYEGQVSGVPSDPSPLQVAVKTLPEVCSEQDELDFLMEALIISKFNHQNIVRCIGVSLQALPRFILLELMAGGDLKSFLRETRPRPNQPSSLAMLDLLHVAQDIACGCQYLEENHFIHRDIAARNCLLTCPGPGRVAKIGDFGMARDIYRASYYRKGGCAMLPVKWMPPEAFMEGIFTSKTDTWSFGVLLWEIFSLGYMPYPSKSNQEVLEFVTSGGRMDPPKNCPGPVYRIMTQCWQHQPEDRPNFAIILERIEYCTQDPDVINTALPVEYGPLMEEEEKVPMRPQDPEGIPPLLVSPPQAKREEGPDPAAPPPLPSTSSGKAAKKPTAAELSGRVTRGPAVEGGHVNMAFSQSNPASELHKVQGSRNKPTSLWNPTYGSWFTEKPTKKNNPPATKGHHDRGNLGREGSCTVPPNVAAGRLPGASLLLEPSSLTASMKEVPLFRLRHFPCGNVNYGYQQQGLPFEGTTAPGSSQYEDALLKTPPGP</sequence>
<keyword id="KW-0067">ATP-binding</keyword>
<keyword id="KW-1003">Cell membrane</keyword>
<keyword id="KW-1015">Disulfide bond</keyword>
<keyword id="KW-0325">Glycoprotein</keyword>
<keyword id="KW-0418">Kinase</keyword>
<keyword id="KW-0472">Membrane</keyword>
<keyword id="KW-0547">Nucleotide-binding</keyword>
<keyword id="KW-0597">Phosphoprotein</keyword>
<keyword id="KW-0675">Receptor</keyword>
<keyword id="KW-1185">Reference proteome</keyword>
<keyword id="KW-0677">Repeat</keyword>
<keyword id="KW-0732">Signal</keyword>
<keyword id="KW-0808">Transferase</keyword>
<keyword id="KW-0812">Transmembrane</keyword>
<keyword id="KW-1133">Transmembrane helix</keyword>
<keyword id="KW-0829">Tyrosine-protein kinase</keyword>
<organism>
    <name type="scientific">Canis lupus familiaris</name>
    <name type="common">Dog</name>
    <name type="synonym">Canis familiaris</name>
    <dbReference type="NCBI Taxonomy" id="9615"/>
    <lineage>
        <taxon>Eukaryota</taxon>
        <taxon>Metazoa</taxon>
        <taxon>Chordata</taxon>
        <taxon>Craniata</taxon>
        <taxon>Vertebrata</taxon>
        <taxon>Euteleostomi</taxon>
        <taxon>Mammalia</taxon>
        <taxon>Eutheria</taxon>
        <taxon>Laurasiatheria</taxon>
        <taxon>Carnivora</taxon>
        <taxon>Caniformia</taxon>
        <taxon>Canidae</taxon>
        <taxon>Canis</taxon>
    </lineage>
</organism>